<feature type="chain" id="PRO_0000309953" description="Large ribosomal subunit protein uL2">
    <location>
        <begin position="1"/>
        <end position="278"/>
    </location>
</feature>
<feature type="region of interest" description="Disordered" evidence="2">
    <location>
        <begin position="214"/>
        <end position="278"/>
    </location>
</feature>
<accession>Q11HQ5</accession>
<comment type="function">
    <text evidence="1">One of the primary rRNA binding proteins. Required for association of the 30S and 50S subunits to form the 70S ribosome, for tRNA binding and peptide bond formation. It has been suggested to have peptidyltransferase activity; this is somewhat controversial. Makes several contacts with the 16S rRNA in the 70S ribosome.</text>
</comment>
<comment type="subunit">
    <text evidence="1">Part of the 50S ribosomal subunit. Forms a bridge to the 30S subunit in the 70S ribosome.</text>
</comment>
<comment type="similarity">
    <text evidence="1">Belongs to the universal ribosomal protein uL2 family.</text>
</comment>
<dbReference type="EMBL" id="CP000390">
    <property type="protein sequence ID" value="ABG63070.1"/>
    <property type="molecule type" value="Genomic_DNA"/>
</dbReference>
<dbReference type="SMR" id="Q11HQ5"/>
<dbReference type="STRING" id="266779.Meso_1675"/>
<dbReference type="KEGG" id="mes:Meso_1675"/>
<dbReference type="eggNOG" id="COG0090">
    <property type="taxonomic scope" value="Bacteria"/>
</dbReference>
<dbReference type="HOGENOM" id="CLU_036235_2_1_5"/>
<dbReference type="OrthoDB" id="9778722at2"/>
<dbReference type="GO" id="GO:0015934">
    <property type="term" value="C:large ribosomal subunit"/>
    <property type="evidence" value="ECO:0007669"/>
    <property type="project" value="InterPro"/>
</dbReference>
<dbReference type="GO" id="GO:0019843">
    <property type="term" value="F:rRNA binding"/>
    <property type="evidence" value="ECO:0007669"/>
    <property type="project" value="UniProtKB-UniRule"/>
</dbReference>
<dbReference type="GO" id="GO:0003735">
    <property type="term" value="F:structural constituent of ribosome"/>
    <property type="evidence" value="ECO:0007669"/>
    <property type="project" value="InterPro"/>
</dbReference>
<dbReference type="GO" id="GO:0016740">
    <property type="term" value="F:transferase activity"/>
    <property type="evidence" value="ECO:0007669"/>
    <property type="project" value="InterPro"/>
</dbReference>
<dbReference type="GO" id="GO:0002181">
    <property type="term" value="P:cytoplasmic translation"/>
    <property type="evidence" value="ECO:0007669"/>
    <property type="project" value="TreeGrafter"/>
</dbReference>
<dbReference type="FunFam" id="2.30.30.30:FF:000001">
    <property type="entry name" value="50S ribosomal protein L2"/>
    <property type="match status" value="1"/>
</dbReference>
<dbReference type="FunFam" id="2.40.50.140:FF:000003">
    <property type="entry name" value="50S ribosomal protein L2"/>
    <property type="match status" value="1"/>
</dbReference>
<dbReference type="FunFam" id="4.10.950.10:FF:000001">
    <property type="entry name" value="50S ribosomal protein L2"/>
    <property type="match status" value="1"/>
</dbReference>
<dbReference type="Gene3D" id="2.30.30.30">
    <property type="match status" value="1"/>
</dbReference>
<dbReference type="Gene3D" id="2.40.50.140">
    <property type="entry name" value="Nucleic acid-binding proteins"/>
    <property type="match status" value="1"/>
</dbReference>
<dbReference type="Gene3D" id="4.10.950.10">
    <property type="entry name" value="Ribosomal protein L2, domain 3"/>
    <property type="match status" value="1"/>
</dbReference>
<dbReference type="HAMAP" id="MF_01320_B">
    <property type="entry name" value="Ribosomal_uL2_B"/>
    <property type="match status" value="1"/>
</dbReference>
<dbReference type="InterPro" id="IPR012340">
    <property type="entry name" value="NA-bd_OB-fold"/>
</dbReference>
<dbReference type="InterPro" id="IPR014722">
    <property type="entry name" value="Rib_uL2_dom2"/>
</dbReference>
<dbReference type="InterPro" id="IPR002171">
    <property type="entry name" value="Ribosomal_uL2"/>
</dbReference>
<dbReference type="InterPro" id="IPR005880">
    <property type="entry name" value="Ribosomal_uL2_bac/org-type"/>
</dbReference>
<dbReference type="InterPro" id="IPR022669">
    <property type="entry name" value="Ribosomal_uL2_C"/>
</dbReference>
<dbReference type="InterPro" id="IPR022671">
    <property type="entry name" value="Ribosomal_uL2_CS"/>
</dbReference>
<dbReference type="InterPro" id="IPR014726">
    <property type="entry name" value="Ribosomal_uL2_dom3"/>
</dbReference>
<dbReference type="InterPro" id="IPR022666">
    <property type="entry name" value="Ribosomal_uL2_RNA-bd_dom"/>
</dbReference>
<dbReference type="InterPro" id="IPR008991">
    <property type="entry name" value="Translation_prot_SH3-like_sf"/>
</dbReference>
<dbReference type="NCBIfam" id="TIGR01171">
    <property type="entry name" value="rplB_bact"/>
    <property type="match status" value="1"/>
</dbReference>
<dbReference type="PANTHER" id="PTHR13691:SF5">
    <property type="entry name" value="LARGE RIBOSOMAL SUBUNIT PROTEIN UL2M"/>
    <property type="match status" value="1"/>
</dbReference>
<dbReference type="PANTHER" id="PTHR13691">
    <property type="entry name" value="RIBOSOMAL PROTEIN L2"/>
    <property type="match status" value="1"/>
</dbReference>
<dbReference type="Pfam" id="PF00181">
    <property type="entry name" value="Ribosomal_L2"/>
    <property type="match status" value="1"/>
</dbReference>
<dbReference type="Pfam" id="PF03947">
    <property type="entry name" value="Ribosomal_L2_C"/>
    <property type="match status" value="1"/>
</dbReference>
<dbReference type="PIRSF" id="PIRSF002158">
    <property type="entry name" value="Ribosomal_L2"/>
    <property type="match status" value="1"/>
</dbReference>
<dbReference type="SMART" id="SM01383">
    <property type="entry name" value="Ribosomal_L2"/>
    <property type="match status" value="1"/>
</dbReference>
<dbReference type="SMART" id="SM01382">
    <property type="entry name" value="Ribosomal_L2_C"/>
    <property type="match status" value="1"/>
</dbReference>
<dbReference type="SUPFAM" id="SSF50249">
    <property type="entry name" value="Nucleic acid-binding proteins"/>
    <property type="match status" value="1"/>
</dbReference>
<dbReference type="SUPFAM" id="SSF50104">
    <property type="entry name" value="Translation proteins SH3-like domain"/>
    <property type="match status" value="1"/>
</dbReference>
<dbReference type="PROSITE" id="PS00467">
    <property type="entry name" value="RIBOSOMAL_L2"/>
    <property type="match status" value="1"/>
</dbReference>
<sequence length="278" mass="30183">MALKNYKPVTPGQRQLVIVDRSGLHKGKPVKGLTVGLTSKGGRNNYGRITARFQGGGHKRTYRLIDFKRRKFDVSGVIERLEYDPNRTGFIALVRYDDGELSYILAPQRLAAGDRVISSAQSVDVKPGNAMPLAAMPVGTIVHNVELKPGKGGQIARSAGSYAQLVGRDQGMAILRLNSGEQRLVSGTCMATVGAVSNPDHANVSLGKAGRKRWLGKRPHNRGVTMNPVDHPHGGGEGRTSGGRHPVSPWGKPTKGRKTRSNKATDKFIMRSRHQRKS</sequence>
<organism>
    <name type="scientific">Chelativorans sp. (strain BNC1)</name>
    <dbReference type="NCBI Taxonomy" id="266779"/>
    <lineage>
        <taxon>Bacteria</taxon>
        <taxon>Pseudomonadati</taxon>
        <taxon>Pseudomonadota</taxon>
        <taxon>Alphaproteobacteria</taxon>
        <taxon>Hyphomicrobiales</taxon>
        <taxon>Phyllobacteriaceae</taxon>
        <taxon>Chelativorans</taxon>
    </lineage>
</organism>
<evidence type="ECO:0000255" key="1">
    <source>
        <dbReference type="HAMAP-Rule" id="MF_01320"/>
    </source>
</evidence>
<evidence type="ECO:0000256" key="2">
    <source>
        <dbReference type="SAM" id="MobiDB-lite"/>
    </source>
</evidence>
<evidence type="ECO:0000305" key="3"/>
<gene>
    <name evidence="1" type="primary">rplB</name>
    <name type="ordered locus">Meso_1675</name>
</gene>
<keyword id="KW-0687">Ribonucleoprotein</keyword>
<keyword id="KW-0689">Ribosomal protein</keyword>
<keyword id="KW-0694">RNA-binding</keyword>
<keyword id="KW-0699">rRNA-binding</keyword>
<proteinExistence type="inferred from homology"/>
<name>RL2_CHESB</name>
<reference key="1">
    <citation type="submission" date="2006-06" db="EMBL/GenBank/DDBJ databases">
        <title>Complete sequence of chromosome of Mesorhizobium sp. BNC1.</title>
        <authorList>
            <consortium name="US DOE Joint Genome Institute"/>
            <person name="Copeland A."/>
            <person name="Lucas S."/>
            <person name="Lapidus A."/>
            <person name="Barry K."/>
            <person name="Detter J.C."/>
            <person name="Glavina del Rio T."/>
            <person name="Hammon N."/>
            <person name="Israni S."/>
            <person name="Dalin E."/>
            <person name="Tice H."/>
            <person name="Pitluck S."/>
            <person name="Chertkov O."/>
            <person name="Brettin T."/>
            <person name="Bruce D."/>
            <person name="Han C."/>
            <person name="Tapia R."/>
            <person name="Gilna P."/>
            <person name="Schmutz J."/>
            <person name="Larimer F."/>
            <person name="Land M."/>
            <person name="Hauser L."/>
            <person name="Kyrpides N."/>
            <person name="Mikhailova N."/>
            <person name="Richardson P."/>
        </authorList>
    </citation>
    <scope>NUCLEOTIDE SEQUENCE [LARGE SCALE GENOMIC DNA]</scope>
    <source>
        <strain>BNC1</strain>
    </source>
</reference>
<protein>
    <recommendedName>
        <fullName evidence="1">Large ribosomal subunit protein uL2</fullName>
    </recommendedName>
    <alternativeName>
        <fullName evidence="3">50S ribosomal protein L2</fullName>
    </alternativeName>
</protein>